<comment type="function">
    <text evidence="1">Binds directly to 23S rRNA. The L1 stalk is quite mobile in the ribosome, and is involved in E site tRNA release.</text>
</comment>
<comment type="function">
    <text evidence="1">Protein L1 is also a translational repressor protein, it controls the translation of the L11 operon by binding to its mRNA.</text>
</comment>
<comment type="subunit">
    <text evidence="1">Part of the 50S ribosomal subunit.</text>
</comment>
<comment type="similarity">
    <text evidence="1">Belongs to the universal ribosomal protein uL1 family.</text>
</comment>
<evidence type="ECO:0000255" key="1">
    <source>
        <dbReference type="HAMAP-Rule" id="MF_01318"/>
    </source>
</evidence>
<evidence type="ECO:0000305" key="2"/>
<gene>
    <name evidence="1" type="primary">rplA</name>
    <name type="ordered locus">CPR_2411</name>
</gene>
<organism>
    <name type="scientific">Clostridium perfringens (strain SM101 / Type A)</name>
    <dbReference type="NCBI Taxonomy" id="289380"/>
    <lineage>
        <taxon>Bacteria</taxon>
        <taxon>Bacillati</taxon>
        <taxon>Bacillota</taxon>
        <taxon>Clostridia</taxon>
        <taxon>Eubacteriales</taxon>
        <taxon>Clostridiaceae</taxon>
        <taxon>Clostridium</taxon>
    </lineage>
</organism>
<dbReference type="EMBL" id="CP000312">
    <property type="protein sequence ID" value="ABG85837.1"/>
    <property type="molecule type" value="Genomic_DNA"/>
</dbReference>
<dbReference type="RefSeq" id="WP_003452172.1">
    <property type="nucleotide sequence ID" value="NZ_CAXVKH010000004.1"/>
</dbReference>
<dbReference type="SMR" id="Q0SQD3"/>
<dbReference type="GeneID" id="93000998"/>
<dbReference type="KEGG" id="cpr:CPR_2411"/>
<dbReference type="Proteomes" id="UP000001824">
    <property type="component" value="Chromosome"/>
</dbReference>
<dbReference type="GO" id="GO:0015934">
    <property type="term" value="C:large ribosomal subunit"/>
    <property type="evidence" value="ECO:0007669"/>
    <property type="project" value="InterPro"/>
</dbReference>
<dbReference type="GO" id="GO:0019843">
    <property type="term" value="F:rRNA binding"/>
    <property type="evidence" value="ECO:0007669"/>
    <property type="project" value="UniProtKB-UniRule"/>
</dbReference>
<dbReference type="GO" id="GO:0003735">
    <property type="term" value="F:structural constituent of ribosome"/>
    <property type="evidence" value="ECO:0007669"/>
    <property type="project" value="InterPro"/>
</dbReference>
<dbReference type="GO" id="GO:0000049">
    <property type="term" value="F:tRNA binding"/>
    <property type="evidence" value="ECO:0007669"/>
    <property type="project" value="UniProtKB-KW"/>
</dbReference>
<dbReference type="GO" id="GO:0006417">
    <property type="term" value="P:regulation of translation"/>
    <property type="evidence" value="ECO:0007669"/>
    <property type="project" value="UniProtKB-KW"/>
</dbReference>
<dbReference type="GO" id="GO:0006412">
    <property type="term" value="P:translation"/>
    <property type="evidence" value="ECO:0007669"/>
    <property type="project" value="UniProtKB-UniRule"/>
</dbReference>
<dbReference type="CDD" id="cd00403">
    <property type="entry name" value="Ribosomal_L1"/>
    <property type="match status" value="1"/>
</dbReference>
<dbReference type="FunFam" id="3.40.50.790:FF:000001">
    <property type="entry name" value="50S ribosomal protein L1"/>
    <property type="match status" value="1"/>
</dbReference>
<dbReference type="Gene3D" id="3.30.190.20">
    <property type="match status" value="1"/>
</dbReference>
<dbReference type="Gene3D" id="3.40.50.790">
    <property type="match status" value="1"/>
</dbReference>
<dbReference type="HAMAP" id="MF_01318_B">
    <property type="entry name" value="Ribosomal_uL1_B"/>
    <property type="match status" value="1"/>
</dbReference>
<dbReference type="InterPro" id="IPR005878">
    <property type="entry name" value="Ribosom_uL1_bac-type"/>
</dbReference>
<dbReference type="InterPro" id="IPR002143">
    <property type="entry name" value="Ribosomal_uL1"/>
</dbReference>
<dbReference type="InterPro" id="IPR023674">
    <property type="entry name" value="Ribosomal_uL1-like"/>
</dbReference>
<dbReference type="InterPro" id="IPR028364">
    <property type="entry name" value="Ribosomal_uL1/biogenesis"/>
</dbReference>
<dbReference type="InterPro" id="IPR016095">
    <property type="entry name" value="Ribosomal_uL1_3-a/b-sand"/>
</dbReference>
<dbReference type="InterPro" id="IPR023673">
    <property type="entry name" value="Ribosomal_uL1_CS"/>
</dbReference>
<dbReference type="NCBIfam" id="TIGR01169">
    <property type="entry name" value="rplA_bact"/>
    <property type="match status" value="1"/>
</dbReference>
<dbReference type="PANTHER" id="PTHR36427">
    <property type="entry name" value="54S RIBOSOMAL PROTEIN L1, MITOCHONDRIAL"/>
    <property type="match status" value="1"/>
</dbReference>
<dbReference type="PANTHER" id="PTHR36427:SF3">
    <property type="entry name" value="LARGE RIBOSOMAL SUBUNIT PROTEIN UL1M"/>
    <property type="match status" value="1"/>
</dbReference>
<dbReference type="Pfam" id="PF00687">
    <property type="entry name" value="Ribosomal_L1"/>
    <property type="match status" value="1"/>
</dbReference>
<dbReference type="PIRSF" id="PIRSF002155">
    <property type="entry name" value="Ribosomal_L1"/>
    <property type="match status" value="1"/>
</dbReference>
<dbReference type="SUPFAM" id="SSF56808">
    <property type="entry name" value="Ribosomal protein L1"/>
    <property type="match status" value="1"/>
</dbReference>
<dbReference type="PROSITE" id="PS01199">
    <property type="entry name" value="RIBOSOMAL_L1"/>
    <property type="match status" value="1"/>
</dbReference>
<proteinExistence type="inferred from homology"/>
<accession>Q0SQD3</accession>
<feature type="chain" id="PRO_0000307995" description="Large ribosomal subunit protein uL1">
    <location>
        <begin position="1"/>
        <end position="229"/>
    </location>
</feature>
<protein>
    <recommendedName>
        <fullName evidence="1">Large ribosomal subunit protein uL1</fullName>
    </recommendedName>
    <alternativeName>
        <fullName evidence="2">50S ribosomal protein L1</fullName>
    </alternativeName>
</protein>
<name>RL1_CLOPS</name>
<sequence>MGKKYIESSKLIDKNALYTPAEALELAVKTAKAKFDETIELHVRLGVDPRHADQQVRGAVVLPHGTGKDVKVLVFAKGEKAKEAEAAGADFVGADELVQKIQGENWFDYDVVVATPDMMGVVGRLGRVLGPKGLMPNPKSGTVTFDVANAIKEIKAGKVEYRVDKTAIVHCPIGKKSFGTEKLVENFKALMDALVKAKPAAAKGQYLKSVSVSATMGPGAKVNPAKVLD</sequence>
<reference key="1">
    <citation type="journal article" date="2006" name="Genome Res.">
        <title>Skewed genomic variability in strains of the toxigenic bacterial pathogen, Clostridium perfringens.</title>
        <authorList>
            <person name="Myers G.S.A."/>
            <person name="Rasko D.A."/>
            <person name="Cheung J.K."/>
            <person name="Ravel J."/>
            <person name="Seshadri R."/>
            <person name="DeBoy R.T."/>
            <person name="Ren Q."/>
            <person name="Varga J."/>
            <person name="Awad M.M."/>
            <person name="Brinkac L.M."/>
            <person name="Daugherty S.C."/>
            <person name="Haft D.H."/>
            <person name="Dodson R.J."/>
            <person name="Madupu R."/>
            <person name="Nelson W.C."/>
            <person name="Rosovitz M.J."/>
            <person name="Sullivan S.A."/>
            <person name="Khouri H."/>
            <person name="Dimitrov G.I."/>
            <person name="Watkins K.L."/>
            <person name="Mulligan S."/>
            <person name="Benton J."/>
            <person name="Radune D."/>
            <person name="Fisher D.J."/>
            <person name="Atkins H.S."/>
            <person name="Hiscox T."/>
            <person name="Jost B.H."/>
            <person name="Billington S.J."/>
            <person name="Songer J.G."/>
            <person name="McClane B.A."/>
            <person name="Titball R.W."/>
            <person name="Rood J.I."/>
            <person name="Melville S.B."/>
            <person name="Paulsen I.T."/>
        </authorList>
    </citation>
    <scope>NUCLEOTIDE SEQUENCE [LARGE SCALE GENOMIC DNA]</scope>
    <source>
        <strain>SM101 / Type A</strain>
    </source>
</reference>
<keyword id="KW-0678">Repressor</keyword>
<keyword id="KW-0687">Ribonucleoprotein</keyword>
<keyword id="KW-0689">Ribosomal protein</keyword>
<keyword id="KW-0694">RNA-binding</keyword>
<keyword id="KW-0699">rRNA-binding</keyword>
<keyword id="KW-0810">Translation regulation</keyword>
<keyword id="KW-0820">tRNA-binding</keyword>